<reference key="1">
    <citation type="journal article" date="2005" name="Nature">
        <title>The genome of the social amoeba Dictyostelium discoideum.</title>
        <authorList>
            <person name="Eichinger L."/>
            <person name="Pachebat J.A."/>
            <person name="Gloeckner G."/>
            <person name="Rajandream M.A."/>
            <person name="Sucgang R."/>
            <person name="Berriman M."/>
            <person name="Song J."/>
            <person name="Olsen R."/>
            <person name="Szafranski K."/>
            <person name="Xu Q."/>
            <person name="Tunggal B."/>
            <person name="Kummerfeld S."/>
            <person name="Madera M."/>
            <person name="Konfortov B.A."/>
            <person name="Rivero F."/>
            <person name="Bankier A.T."/>
            <person name="Lehmann R."/>
            <person name="Hamlin N."/>
            <person name="Davies R."/>
            <person name="Gaudet P."/>
            <person name="Fey P."/>
            <person name="Pilcher K."/>
            <person name="Chen G."/>
            <person name="Saunders D."/>
            <person name="Sodergren E.J."/>
            <person name="Davis P."/>
            <person name="Kerhornou A."/>
            <person name="Nie X."/>
            <person name="Hall N."/>
            <person name="Anjard C."/>
            <person name="Hemphill L."/>
            <person name="Bason N."/>
            <person name="Farbrother P."/>
            <person name="Desany B."/>
            <person name="Just E."/>
            <person name="Morio T."/>
            <person name="Rost R."/>
            <person name="Churcher C.M."/>
            <person name="Cooper J."/>
            <person name="Haydock S."/>
            <person name="van Driessche N."/>
            <person name="Cronin A."/>
            <person name="Goodhead I."/>
            <person name="Muzny D.M."/>
            <person name="Mourier T."/>
            <person name="Pain A."/>
            <person name="Lu M."/>
            <person name="Harper D."/>
            <person name="Lindsay R."/>
            <person name="Hauser H."/>
            <person name="James K.D."/>
            <person name="Quiles M."/>
            <person name="Madan Babu M."/>
            <person name="Saito T."/>
            <person name="Buchrieser C."/>
            <person name="Wardroper A."/>
            <person name="Felder M."/>
            <person name="Thangavelu M."/>
            <person name="Johnson D."/>
            <person name="Knights A."/>
            <person name="Loulseged H."/>
            <person name="Mungall K.L."/>
            <person name="Oliver K."/>
            <person name="Price C."/>
            <person name="Quail M.A."/>
            <person name="Urushihara H."/>
            <person name="Hernandez J."/>
            <person name="Rabbinowitsch E."/>
            <person name="Steffen D."/>
            <person name="Sanders M."/>
            <person name="Ma J."/>
            <person name="Kohara Y."/>
            <person name="Sharp S."/>
            <person name="Simmonds M.N."/>
            <person name="Spiegler S."/>
            <person name="Tivey A."/>
            <person name="Sugano S."/>
            <person name="White B."/>
            <person name="Walker D."/>
            <person name="Woodward J.R."/>
            <person name="Winckler T."/>
            <person name="Tanaka Y."/>
            <person name="Shaulsky G."/>
            <person name="Schleicher M."/>
            <person name="Weinstock G.M."/>
            <person name="Rosenthal A."/>
            <person name="Cox E.C."/>
            <person name="Chisholm R.L."/>
            <person name="Gibbs R.A."/>
            <person name="Loomis W.F."/>
            <person name="Platzer M."/>
            <person name="Kay R.R."/>
            <person name="Williams J.G."/>
            <person name="Dear P.H."/>
            <person name="Noegel A.A."/>
            <person name="Barrell B.G."/>
            <person name="Kuspa A."/>
        </authorList>
    </citation>
    <scope>NUCLEOTIDE SEQUENCE [LARGE SCALE GENOMIC DNA]</scope>
    <source>
        <strain>AX4</strain>
    </source>
</reference>
<accession>Q54VB3</accession>
<proteinExistence type="evidence at transcript level"/>
<feature type="chain" id="PRO_0000330874" description="NADPH-dependent 3-demethoxyubiquinone 3-hydroxylase, mitochondrial">
    <location>
        <begin position="1"/>
        <end position="217"/>
    </location>
</feature>
<feature type="repeat" description="1">
    <location>
        <begin position="49"/>
        <end position="130"/>
    </location>
</feature>
<feature type="repeat" description="2">
    <location>
        <begin position="131"/>
        <end position="217"/>
    </location>
</feature>
<feature type="region of interest" description="2 X approximate tandem repeats">
    <location>
        <begin position="49"/>
        <end position="217"/>
    </location>
</feature>
<feature type="binding site" evidence="1">
    <location>
        <position position="52"/>
    </location>
    <ligand>
        <name>NADH</name>
        <dbReference type="ChEBI" id="CHEBI:57945"/>
    </ligand>
</feature>
<feature type="binding site" evidence="2">
    <location>
        <position position="61"/>
    </location>
    <ligand>
        <name>Fe cation</name>
        <dbReference type="ChEBI" id="CHEBI:24875"/>
        <label>1</label>
    </ligand>
</feature>
<feature type="binding site" evidence="2">
    <location>
        <position position="91"/>
    </location>
    <ligand>
        <name>Fe cation</name>
        <dbReference type="ChEBI" id="CHEBI:24875"/>
        <label>1</label>
    </ligand>
</feature>
<feature type="binding site" evidence="2">
    <location>
        <position position="91"/>
    </location>
    <ligand>
        <name>Fe cation</name>
        <dbReference type="ChEBI" id="CHEBI:24875"/>
        <label>2</label>
    </ligand>
</feature>
<feature type="binding site" evidence="2">
    <location>
        <position position="94"/>
    </location>
    <ligand>
        <name>Fe cation</name>
        <dbReference type="ChEBI" id="CHEBI:24875"/>
        <label>1</label>
    </ligand>
</feature>
<feature type="binding site" evidence="2">
    <location>
        <position position="143"/>
    </location>
    <ligand>
        <name>Fe cation</name>
        <dbReference type="ChEBI" id="CHEBI:24875"/>
        <label>2</label>
    </ligand>
</feature>
<feature type="binding site" evidence="2">
    <location>
        <position position="178"/>
    </location>
    <ligand>
        <name>Fe cation</name>
        <dbReference type="ChEBI" id="CHEBI:24875"/>
        <label>1</label>
    </ligand>
</feature>
<feature type="binding site" evidence="2">
    <location>
        <position position="178"/>
    </location>
    <ligand>
        <name>Fe cation</name>
        <dbReference type="ChEBI" id="CHEBI:24875"/>
        <label>2</label>
    </ligand>
</feature>
<feature type="binding site" evidence="2">
    <location>
        <position position="181"/>
    </location>
    <ligand>
        <name>Fe cation</name>
        <dbReference type="ChEBI" id="CHEBI:24875"/>
        <label>2</label>
    </ligand>
</feature>
<feature type="binding site" evidence="1">
    <location>
        <position position="216"/>
    </location>
    <ligand>
        <name>NADH</name>
        <dbReference type="ChEBI" id="CHEBI:57945"/>
    </ligand>
</feature>
<evidence type="ECO:0000250" key="1">
    <source>
        <dbReference type="UniProtKB" id="Q99807"/>
    </source>
</evidence>
<evidence type="ECO:0000255" key="2">
    <source>
        <dbReference type="HAMAP-Rule" id="MF_03194"/>
    </source>
</evidence>
<sequence>MNSLIKSTKFLKKTNIIRSYCTKTNNNNNTNITKNVLSEIEKEKLKRQIIERIIRVDHAGEFGAARIYEGQLAVLANTKEGPLIREMADQEKEHQAKFNQLIYEKRVRPTILSPIWNVAGFGLGYVSALMGKEAAMAVTVAVETVISDHYNDQLRQLNDAGIDDKELKETIKKFRDDELEHMHIGIEHDAELAPLYKPFSELVKVGTKTAIWLSTRV</sequence>
<dbReference type="EC" id="1.14.13.253" evidence="2"/>
<dbReference type="EMBL" id="AAFI02000036">
    <property type="protein sequence ID" value="EAL67216.1"/>
    <property type="molecule type" value="Genomic_DNA"/>
</dbReference>
<dbReference type="RefSeq" id="XP_641196.1">
    <property type="nucleotide sequence ID" value="XM_636104.1"/>
</dbReference>
<dbReference type="SMR" id="Q54VB3"/>
<dbReference type="FunCoup" id="Q54VB3">
    <property type="interactions" value="383"/>
</dbReference>
<dbReference type="STRING" id="44689.Q54VB3"/>
<dbReference type="GlyGen" id="Q54VB3">
    <property type="glycosylation" value="1 site"/>
</dbReference>
<dbReference type="PaxDb" id="44689-DDB0266669"/>
<dbReference type="EnsemblProtists" id="EAL67216">
    <property type="protein sequence ID" value="EAL67216"/>
    <property type="gene ID" value="DDB_G0280475"/>
</dbReference>
<dbReference type="GeneID" id="8622577"/>
<dbReference type="KEGG" id="ddi:DDB_G0280475"/>
<dbReference type="dictyBase" id="DDB_G0280475">
    <property type="gene designation" value="coq7"/>
</dbReference>
<dbReference type="VEuPathDB" id="AmoebaDB:DDB_G0280475"/>
<dbReference type="eggNOG" id="KOG4061">
    <property type="taxonomic scope" value="Eukaryota"/>
</dbReference>
<dbReference type="HOGENOM" id="CLU_071892_2_0_1"/>
<dbReference type="InParanoid" id="Q54VB3"/>
<dbReference type="OMA" id="WSTAVMG"/>
<dbReference type="PhylomeDB" id="Q54VB3"/>
<dbReference type="Reactome" id="R-DDI-2142789">
    <property type="pathway name" value="Ubiquinol biosynthesis"/>
</dbReference>
<dbReference type="UniPathway" id="UPA00232"/>
<dbReference type="PRO" id="PR:Q54VB3"/>
<dbReference type="Proteomes" id="UP000002195">
    <property type="component" value="Chromosome 3"/>
</dbReference>
<dbReference type="GO" id="GO:0031314">
    <property type="term" value="C:extrinsic component of mitochondrial inner membrane"/>
    <property type="evidence" value="ECO:0007669"/>
    <property type="project" value="UniProtKB-UniRule"/>
</dbReference>
<dbReference type="GO" id="GO:0005743">
    <property type="term" value="C:mitochondrial inner membrane"/>
    <property type="evidence" value="ECO:0000318"/>
    <property type="project" value="GO_Central"/>
</dbReference>
<dbReference type="GO" id="GO:0005739">
    <property type="term" value="C:mitochondrion"/>
    <property type="evidence" value="ECO:0000250"/>
    <property type="project" value="dictyBase"/>
</dbReference>
<dbReference type="GO" id="GO:0008682">
    <property type="term" value="F:3-demethoxyubiquinol 3-hydroxylase activity"/>
    <property type="evidence" value="ECO:0000318"/>
    <property type="project" value="GO_Central"/>
</dbReference>
<dbReference type="GO" id="GO:0160224">
    <property type="term" value="F:3-demethoxyubiquinone 3-hydroxylase (NADH) activity"/>
    <property type="evidence" value="ECO:0007669"/>
    <property type="project" value="RHEA"/>
</dbReference>
<dbReference type="GO" id="GO:0046872">
    <property type="term" value="F:metal ion binding"/>
    <property type="evidence" value="ECO:0007669"/>
    <property type="project" value="UniProtKB-KW"/>
</dbReference>
<dbReference type="GO" id="GO:0006744">
    <property type="term" value="P:ubiquinone biosynthetic process"/>
    <property type="evidence" value="ECO:0000250"/>
    <property type="project" value="dictyBase"/>
</dbReference>
<dbReference type="CDD" id="cd01042">
    <property type="entry name" value="DMQH"/>
    <property type="match status" value="1"/>
</dbReference>
<dbReference type="FunFam" id="1.20.1260.10:FF:000025">
    <property type="entry name" value="5-demethoxyubiquinone hydroxylase, mitochondrial"/>
    <property type="match status" value="1"/>
</dbReference>
<dbReference type="Gene3D" id="1.20.1260.10">
    <property type="match status" value="1"/>
</dbReference>
<dbReference type="HAMAP" id="MF_01658">
    <property type="entry name" value="COQ7"/>
    <property type="match status" value="1"/>
</dbReference>
<dbReference type="InterPro" id="IPR012347">
    <property type="entry name" value="Ferritin-like"/>
</dbReference>
<dbReference type="InterPro" id="IPR009078">
    <property type="entry name" value="Ferritin-like_SF"/>
</dbReference>
<dbReference type="InterPro" id="IPR011566">
    <property type="entry name" value="Ubq_synth_Coq7"/>
</dbReference>
<dbReference type="PANTHER" id="PTHR11237:SF4">
    <property type="entry name" value="5-DEMETHOXYUBIQUINONE HYDROXYLASE, MITOCHONDRIAL"/>
    <property type="match status" value="1"/>
</dbReference>
<dbReference type="PANTHER" id="PTHR11237">
    <property type="entry name" value="COENZYME Q10 BIOSYNTHESIS PROTEIN 7"/>
    <property type="match status" value="1"/>
</dbReference>
<dbReference type="Pfam" id="PF03232">
    <property type="entry name" value="COQ7"/>
    <property type="match status" value="1"/>
</dbReference>
<dbReference type="SUPFAM" id="SSF47240">
    <property type="entry name" value="Ferritin-like"/>
    <property type="match status" value="1"/>
</dbReference>
<keyword id="KW-0408">Iron</keyword>
<keyword id="KW-0472">Membrane</keyword>
<keyword id="KW-0479">Metal-binding</keyword>
<keyword id="KW-0496">Mitochondrion</keyword>
<keyword id="KW-0999">Mitochondrion inner membrane</keyword>
<keyword id="KW-0503">Monooxygenase</keyword>
<keyword id="KW-0520">NAD</keyword>
<keyword id="KW-0560">Oxidoreductase</keyword>
<keyword id="KW-1185">Reference proteome</keyword>
<keyword id="KW-0677">Repeat</keyword>
<keyword id="KW-0831">Ubiquinone biosynthesis</keyword>
<protein>
    <recommendedName>
        <fullName evidence="2">NADPH-dependent 3-demethoxyubiquinone 3-hydroxylase, mitochondrial</fullName>
        <ecNumber evidence="2">1.14.13.253</ecNumber>
    </recommendedName>
    <alternativeName>
        <fullName evidence="2">3-demethoxyubiquinone 3-hydroxylase (NADH)</fullName>
    </alternativeName>
    <alternativeName>
        <fullName evidence="2">Ubiquinone biosynthesis monooxygenase COQ7</fullName>
    </alternativeName>
</protein>
<name>COQ7_DICDI</name>
<comment type="function">
    <text evidence="2">Catalyzes the hydroxylation of the 5-methoxy-2-methyl-3-(all-trans-polyprenyl)benzoquinone at the C6 position and participates in the biosynthesis of ubiquinone. Catalyzes the reaction through a substrate-mediated reduction pathway, whereby NADH shuttles electrons to 5-methoxy-2-methyl-3-(all-trans-decaprenyl)benzoquinone, which then transfers the electrons to the two Fe(3+) centers. The binding of 5-methoxy-2-methyl-3-(all-trans-polyprenyl)benzoquinone (DMQn) mediates reduction of the diiron center by nicotinamide adenine dinucleotide (NADH) and initiates oxygen activation for subsequent DMQ hydroxylation (By similarity). Also has a structural role in the COQ enzyme complex, stabilizing other COQ polypeptides (By similarity).</text>
</comment>
<comment type="catalytic activity">
    <reaction evidence="2">
        <text>a 5-methoxy-2-methyl-3-(all-trans-polyprenyl)benzoquinone + NADH + O2 = a 3-demethylubiquinone + NAD(+) + H2O</text>
        <dbReference type="Rhea" id="RHEA:81211"/>
        <dbReference type="Rhea" id="RHEA-COMP:19654"/>
        <dbReference type="Rhea" id="RHEA-COMP:19655"/>
        <dbReference type="ChEBI" id="CHEBI:15377"/>
        <dbReference type="ChEBI" id="CHEBI:15379"/>
        <dbReference type="ChEBI" id="CHEBI:57540"/>
        <dbReference type="ChEBI" id="CHEBI:57945"/>
        <dbReference type="ChEBI" id="CHEBI:231825"/>
        <dbReference type="ChEBI" id="CHEBI:231829"/>
        <dbReference type="EC" id="1.14.13.253"/>
    </reaction>
    <physiologicalReaction direction="left-to-right" evidence="2">
        <dbReference type="Rhea" id="RHEA:81212"/>
    </physiologicalReaction>
</comment>
<comment type="cofactor">
    <cofactor evidence="2">
        <name>Fe cation</name>
        <dbReference type="ChEBI" id="CHEBI:24875"/>
    </cofactor>
    <text evidence="2">Binds 2 iron ions per subunit.</text>
</comment>
<comment type="pathway">
    <text evidence="2">Cofactor biosynthesis; ubiquinone biosynthesis.</text>
</comment>
<comment type="subunit">
    <text evidence="2">Component of a multi-subunit COQ enzyme complex.</text>
</comment>
<comment type="subcellular location">
    <subcellularLocation>
        <location evidence="2">Mitochondrion inner membrane</location>
        <topology evidence="2">Peripheral membrane protein</topology>
        <orientation evidence="2">Matrix side</orientation>
    </subcellularLocation>
</comment>
<comment type="miscellaneous">
    <text evidence="2">This protein may be expected to contain an N-terminal transit peptide but none has been predicted.</text>
</comment>
<comment type="similarity">
    <text evidence="2">Belongs to the COQ7 family.</text>
</comment>
<gene>
    <name evidence="2" type="primary">coq7</name>
    <name type="ORF">DDB_G0280475</name>
</gene>
<organism>
    <name type="scientific">Dictyostelium discoideum</name>
    <name type="common">Social amoeba</name>
    <dbReference type="NCBI Taxonomy" id="44689"/>
    <lineage>
        <taxon>Eukaryota</taxon>
        <taxon>Amoebozoa</taxon>
        <taxon>Evosea</taxon>
        <taxon>Eumycetozoa</taxon>
        <taxon>Dictyostelia</taxon>
        <taxon>Dictyosteliales</taxon>
        <taxon>Dictyosteliaceae</taxon>
        <taxon>Dictyostelium</taxon>
    </lineage>
</organism>